<proteinExistence type="inferred from homology"/>
<gene>
    <name evidence="1" type="primary">cobT</name>
    <name type="ordered locus">MUL_3565</name>
</gene>
<accession>A0PTP2</accession>
<name>COBT_MYCUA</name>
<protein>
    <recommendedName>
        <fullName evidence="1">Nicotinate-nucleotide--dimethylbenzimidazole phosphoribosyltransferase</fullName>
        <shortName evidence="1">NN:DBI PRT</shortName>
        <ecNumber evidence="1">2.4.2.21</ecNumber>
    </recommendedName>
    <alternativeName>
        <fullName evidence="1">N(1)-alpha-phosphoribosyltransferase</fullName>
    </alternativeName>
</protein>
<reference key="1">
    <citation type="journal article" date="2007" name="Genome Res.">
        <title>Reductive evolution and niche adaptation inferred from the genome of Mycobacterium ulcerans, the causative agent of Buruli ulcer.</title>
        <authorList>
            <person name="Stinear T.P."/>
            <person name="Seemann T."/>
            <person name="Pidot S."/>
            <person name="Frigui W."/>
            <person name="Reysset G."/>
            <person name="Garnier T."/>
            <person name="Meurice G."/>
            <person name="Simon D."/>
            <person name="Bouchier C."/>
            <person name="Ma L."/>
            <person name="Tichit M."/>
            <person name="Porter J.L."/>
            <person name="Ryan J."/>
            <person name="Johnson P.D.R."/>
            <person name="Davies J.K."/>
            <person name="Jenkin G.A."/>
            <person name="Small P.L.C."/>
            <person name="Jones L.M."/>
            <person name="Tekaia F."/>
            <person name="Laval F."/>
            <person name="Daffe M."/>
            <person name="Parkhill J."/>
            <person name="Cole S.T."/>
        </authorList>
    </citation>
    <scope>NUCLEOTIDE SEQUENCE [LARGE SCALE GENOMIC DNA]</scope>
    <source>
        <strain>Agy99</strain>
    </source>
</reference>
<organism>
    <name type="scientific">Mycobacterium ulcerans (strain Agy99)</name>
    <dbReference type="NCBI Taxonomy" id="362242"/>
    <lineage>
        <taxon>Bacteria</taxon>
        <taxon>Bacillati</taxon>
        <taxon>Actinomycetota</taxon>
        <taxon>Actinomycetes</taxon>
        <taxon>Mycobacteriales</taxon>
        <taxon>Mycobacteriaceae</taxon>
        <taxon>Mycobacterium</taxon>
        <taxon>Mycobacterium ulcerans group</taxon>
    </lineage>
</organism>
<dbReference type="EC" id="2.4.2.21" evidence="1"/>
<dbReference type="EMBL" id="CP000325">
    <property type="protein sequence ID" value="ABL05711.1"/>
    <property type="molecule type" value="Genomic_DNA"/>
</dbReference>
<dbReference type="RefSeq" id="WP_011741317.1">
    <property type="nucleotide sequence ID" value="NC_008611.1"/>
</dbReference>
<dbReference type="SMR" id="A0PTP2"/>
<dbReference type="KEGG" id="mul:MUL_3565"/>
<dbReference type="eggNOG" id="COG2038">
    <property type="taxonomic scope" value="Bacteria"/>
</dbReference>
<dbReference type="HOGENOM" id="CLU_002982_0_2_11"/>
<dbReference type="UniPathway" id="UPA00061">
    <property type="reaction ID" value="UER00516"/>
</dbReference>
<dbReference type="Proteomes" id="UP000000765">
    <property type="component" value="Chromosome"/>
</dbReference>
<dbReference type="GO" id="GO:0008939">
    <property type="term" value="F:nicotinate-nucleotide-dimethylbenzimidazole phosphoribosyltransferase activity"/>
    <property type="evidence" value="ECO:0007669"/>
    <property type="project" value="UniProtKB-UniRule"/>
</dbReference>
<dbReference type="GO" id="GO:0009236">
    <property type="term" value="P:cobalamin biosynthetic process"/>
    <property type="evidence" value="ECO:0007669"/>
    <property type="project" value="UniProtKB-KW"/>
</dbReference>
<dbReference type="CDD" id="cd02439">
    <property type="entry name" value="DMB-PRT_CobT"/>
    <property type="match status" value="1"/>
</dbReference>
<dbReference type="Gene3D" id="1.10.1610.10">
    <property type="match status" value="1"/>
</dbReference>
<dbReference type="Gene3D" id="3.40.50.10210">
    <property type="match status" value="1"/>
</dbReference>
<dbReference type="HAMAP" id="MF_00230">
    <property type="entry name" value="CobT"/>
    <property type="match status" value="1"/>
</dbReference>
<dbReference type="InterPro" id="IPR003200">
    <property type="entry name" value="Nict_dMeBzImd_PRibTrfase"/>
</dbReference>
<dbReference type="InterPro" id="IPR017846">
    <property type="entry name" value="Nict_dMeBzImd_PRibTrfase_bact"/>
</dbReference>
<dbReference type="InterPro" id="IPR023195">
    <property type="entry name" value="Nict_dMeBzImd_PRibTrfase_N"/>
</dbReference>
<dbReference type="InterPro" id="IPR036087">
    <property type="entry name" value="Nict_dMeBzImd_PRibTrfase_sf"/>
</dbReference>
<dbReference type="NCBIfam" id="TIGR03160">
    <property type="entry name" value="cobT_DBIPRT"/>
    <property type="match status" value="1"/>
</dbReference>
<dbReference type="NCBIfam" id="NF000996">
    <property type="entry name" value="PRK00105.1"/>
    <property type="match status" value="1"/>
</dbReference>
<dbReference type="PANTHER" id="PTHR43463">
    <property type="entry name" value="NICOTINATE-NUCLEOTIDE--DIMETHYLBENZIMIDAZOLE PHOSPHORIBOSYLTRANSFERASE"/>
    <property type="match status" value="1"/>
</dbReference>
<dbReference type="PANTHER" id="PTHR43463:SF1">
    <property type="entry name" value="NICOTINATE-NUCLEOTIDE--DIMETHYLBENZIMIDAZOLE PHOSPHORIBOSYLTRANSFERASE"/>
    <property type="match status" value="1"/>
</dbReference>
<dbReference type="Pfam" id="PF02277">
    <property type="entry name" value="DBI_PRT"/>
    <property type="match status" value="1"/>
</dbReference>
<dbReference type="SUPFAM" id="SSF52733">
    <property type="entry name" value="Nicotinate mononucleotide:5,6-dimethylbenzimidazole phosphoribosyltransferase (CobT)"/>
    <property type="match status" value="1"/>
</dbReference>
<keyword id="KW-0169">Cobalamin biosynthesis</keyword>
<keyword id="KW-0328">Glycosyltransferase</keyword>
<keyword id="KW-0808">Transferase</keyword>
<sequence>MIGFAPISAPDALAEAAARARQDALTKPRGALGRLEDLSAWVASCQGQCPPRQFQRARVVVFAGDHGITRSGVSAYPPDATAQMVANIDGGGAAINALADVAGATVRVVDLAVDAEALSEQIGAHKVRRGSGDIATEDALTDDQTAAAIAAGQQIADAEVDAGADLLIAGDMGIGNTTPAAVLVAALTNTEPVAVVGFGTGVDDATWSRKTAAVRDALFRSARVLPDPVALLRCCGGADLAAMAGFCAQAAVRRTPLLLDGMAVTAAALVAERLAPGARQWWQAGHRSTEPGHQLALTALALDPVVDLRMRLGEGTGATVALPVLRAAVAALSSMATFAEAGVSTACDDAGATEPPES</sequence>
<evidence type="ECO:0000255" key="1">
    <source>
        <dbReference type="HAMAP-Rule" id="MF_00230"/>
    </source>
</evidence>
<feature type="chain" id="PRO_1000118969" description="Nicotinate-nucleotide--dimethylbenzimidazole phosphoribosyltransferase">
    <location>
        <begin position="1"/>
        <end position="358"/>
    </location>
</feature>
<feature type="active site" description="Proton acceptor" evidence="1">
    <location>
        <position position="314"/>
    </location>
</feature>
<comment type="function">
    <text evidence="1">Catalyzes the synthesis of alpha-ribazole-5'-phosphate from nicotinate mononucleotide (NAMN) and 5,6-dimethylbenzimidazole (DMB).</text>
</comment>
<comment type="catalytic activity">
    <reaction evidence="1">
        <text>5,6-dimethylbenzimidazole + nicotinate beta-D-ribonucleotide = alpha-ribazole 5'-phosphate + nicotinate + H(+)</text>
        <dbReference type="Rhea" id="RHEA:11196"/>
        <dbReference type="ChEBI" id="CHEBI:15378"/>
        <dbReference type="ChEBI" id="CHEBI:15890"/>
        <dbReference type="ChEBI" id="CHEBI:32544"/>
        <dbReference type="ChEBI" id="CHEBI:57502"/>
        <dbReference type="ChEBI" id="CHEBI:57918"/>
        <dbReference type="EC" id="2.4.2.21"/>
    </reaction>
</comment>
<comment type="pathway">
    <text evidence="1">Nucleoside biosynthesis; alpha-ribazole biosynthesis; alpha-ribazole from 5,6-dimethylbenzimidazole: step 1/2.</text>
</comment>
<comment type="similarity">
    <text evidence="1">Belongs to the CobT family.</text>
</comment>